<evidence type="ECO:0000255" key="1">
    <source>
        <dbReference type="HAMAP-Rule" id="MF_00309"/>
    </source>
</evidence>
<comment type="function">
    <text evidence="1">Produces ATP from ADP in the presence of a proton gradient across the membrane. The V-type alpha chain is a catalytic subunit.</text>
</comment>
<comment type="catalytic activity">
    <reaction evidence="1">
        <text>ATP + H2O + 4 H(+)(in) = ADP + phosphate + 5 H(+)(out)</text>
        <dbReference type="Rhea" id="RHEA:57720"/>
        <dbReference type="ChEBI" id="CHEBI:15377"/>
        <dbReference type="ChEBI" id="CHEBI:15378"/>
        <dbReference type="ChEBI" id="CHEBI:30616"/>
        <dbReference type="ChEBI" id="CHEBI:43474"/>
        <dbReference type="ChEBI" id="CHEBI:456216"/>
        <dbReference type="EC" id="7.1.2.2"/>
    </reaction>
</comment>
<comment type="similarity">
    <text evidence="1">Belongs to the ATPase alpha/beta chains family.</text>
</comment>
<keyword id="KW-0066">ATP synthesis</keyword>
<keyword id="KW-0067">ATP-binding</keyword>
<keyword id="KW-0375">Hydrogen ion transport</keyword>
<keyword id="KW-0406">Ion transport</keyword>
<keyword id="KW-0547">Nucleotide-binding</keyword>
<keyword id="KW-1278">Translocase</keyword>
<keyword id="KW-0813">Transport</keyword>
<feature type="chain" id="PRO_1000059335" description="V-type ATP synthase alpha chain">
    <location>
        <begin position="1"/>
        <end position="591"/>
    </location>
</feature>
<feature type="binding site" evidence="1">
    <location>
        <begin position="242"/>
        <end position="249"/>
    </location>
    <ligand>
        <name>ATP</name>
        <dbReference type="ChEBI" id="CHEBI:30616"/>
    </ligand>
</feature>
<protein>
    <recommendedName>
        <fullName evidence="1">V-type ATP synthase alpha chain</fullName>
        <ecNumber evidence="1">7.1.2.2</ecNumber>
    </recommendedName>
    <alternativeName>
        <fullName evidence="1">V-ATPase subunit A</fullName>
    </alternativeName>
</protein>
<dbReference type="EC" id="7.1.2.2" evidence="1"/>
<dbReference type="EMBL" id="CP000051">
    <property type="protein sequence ID" value="AAX50568.1"/>
    <property type="molecule type" value="Genomic_DNA"/>
</dbReference>
<dbReference type="RefSeq" id="WP_009871655.1">
    <property type="nucleotide sequence ID" value="NC_007429.1"/>
</dbReference>
<dbReference type="SMR" id="Q3KM54"/>
<dbReference type="KEGG" id="cta:CTA_0330"/>
<dbReference type="HOGENOM" id="CLU_008162_1_1_0"/>
<dbReference type="Proteomes" id="UP000002532">
    <property type="component" value="Chromosome"/>
</dbReference>
<dbReference type="GO" id="GO:0005524">
    <property type="term" value="F:ATP binding"/>
    <property type="evidence" value="ECO:0007669"/>
    <property type="project" value="UniProtKB-UniRule"/>
</dbReference>
<dbReference type="GO" id="GO:0046933">
    <property type="term" value="F:proton-transporting ATP synthase activity, rotational mechanism"/>
    <property type="evidence" value="ECO:0007669"/>
    <property type="project" value="UniProtKB-UniRule"/>
</dbReference>
<dbReference type="GO" id="GO:0046961">
    <property type="term" value="F:proton-transporting ATPase activity, rotational mechanism"/>
    <property type="evidence" value="ECO:0007669"/>
    <property type="project" value="InterPro"/>
</dbReference>
<dbReference type="GO" id="GO:0042777">
    <property type="term" value="P:proton motive force-driven plasma membrane ATP synthesis"/>
    <property type="evidence" value="ECO:0007669"/>
    <property type="project" value="UniProtKB-UniRule"/>
</dbReference>
<dbReference type="CDD" id="cd01426">
    <property type="entry name" value="ATP-synt_F1_V1_A1_AB_FliI_N"/>
    <property type="match status" value="1"/>
</dbReference>
<dbReference type="CDD" id="cd18111">
    <property type="entry name" value="ATP-synt_V_A-type_alpha_C"/>
    <property type="match status" value="1"/>
</dbReference>
<dbReference type="CDD" id="cd01134">
    <property type="entry name" value="V_A-ATPase_A"/>
    <property type="match status" value="1"/>
</dbReference>
<dbReference type="FunFam" id="1.10.1140.10:FF:000007">
    <property type="entry name" value="V-type ATP synthase alpha chain"/>
    <property type="match status" value="1"/>
</dbReference>
<dbReference type="FunFam" id="3.40.50.300:FF:000675">
    <property type="entry name" value="V-type ATP synthase alpha chain"/>
    <property type="match status" value="1"/>
</dbReference>
<dbReference type="Gene3D" id="2.30.30.650">
    <property type="match status" value="1"/>
</dbReference>
<dbReference type="Gene3D" id="2.40.50.100">
    <property type="match status" value="1"/>
</dbReference>
<dbReference type="Gene3D" id="1.10.1140.10">
    <property type="entry name" value="Bovine Mitochondrial F1-atpase, Atp Synthase Beta Chain, Chain D, domain 3"/>
    <property type="match status" value="1"/>
</dbReference>
<dbReference type="Gene3D" id="3.40.50.300">
    <property type="entry name" value="P-loop containing nucleotide triphosphate hydrolases"/>
    <property type="match status" value="1"/>
</dbReference>
<dbReference type="HAMAP" id="MF_00309">
    <property type="entry name" value="ATP_synth_A_arch"/>
    <property type="match status" value="1"/>
</dbReference>
<dbReference type="InterPro" id="IPR055190">
    <property type="entry name" value="ATP-synt_VA_C"/>
</dbReference>
<dbReference type="InterPro" id="IPR031686">
    <property type="entry name" value="ATP-synth_a_Xtn"/>
</dbReference>
<dbReference type="InterPro" id="IPR020003">
    <property type="entry name" value="ATPase_a/bsu_AS"/>
</dbReference>
<dbReference type="InterPro" id="IPR004100">
    <property type="entry name" value="ATPase_F1/V1/A1_a/bsu_N"/>
</dbReference>
<dbReference type="InterPro" id="IPR000194">
    <property type="entry name" value="ATPase_F1/V1/A1_a/bsu_nucl-bd"/>
</dbReference>
<dbReference type="InterPro" id="IPR024034">
    <property type="entry name" value="ATPase_F1/V1_b/a_C"/>
</dbReference>
<dbReference type="InterPro" id="IPR027417">
    <property type="entry name" value="P-loop_NTPase"/>
</dbReference>
<dbReference type="InterPro" id="IPR022878">
    <property type="entry name" value="V-ATPase_asu"/>
</dbReference>
<dbReference type="NCBIfam" id="NF003220">
    <property type="entry name" value="PRK04192.1"/>
    <property type="match status" value="1"/>
</dbReference>
<dbReference type="PANTHER" id="PTHR43607:SF1">
    <property type="entry name" value="H(+)-TRANSPORTING TWO-SECTOR ATPASE"/>
    <property type="match status" value="1"/>
</dbReference>
<dbReference type="PANTHER" id="PTHR43607">
    <property type="entry name" value="V-TYPE PROTON ATPASE CATALYTIC SUBUNIT A"/>
    <property type="match status" value="1"/>
</dbReference>
<dbReference type="Pfam" id="PF00006">
    <property type="entry name" value="ATP-synt_ab"/>
    <property type="match status" value="1"/>
</dbReference>
<dbReference type="Pfam" id="PF02874">
    <property type="entry name" value="ATP-synt_ab_N"/>
    <property type="match status" value="1"/>
</dbReference>
<dbReference type="Pfam" id="PF16886">
    <property type="entry name" value="ATP-synt_ab_Xtn"/>
    <property type="match status" value="1"/>
</dbReference>
<dbReference type="Pfam" id="PF22919">
    <property type="entry name" value="ATP-synt_VA_C"/>
    <property type="match status" value="1"/>
</dbReference>
<dbReference type="SUPFAM" id="SSF52540">
    <property type="entry name" value="P-loop containing nucleoside triphosphate hydrolases"/>
    <property type="match status" value="1"/>
</dbReference>
<dbReference type="PROSITE" id="PS00152">
    <property type="entry name" value="ATPASE_ALPHA_BETA"/>
    <property type="match status" value="1"/>
</dbReference>
<sequence>MVATSKQTTQGYVVEAYGNLLRVHVDGHVRQGEVAYVSVDDTWLKAEIIEVVGDEVKIQVFEETQGISRGALVTFSGHLLEAELGPGLLQGIFDGLQNRLEILADTSLFLRRGEYVNAICRETVWAYTQKASVGSVLSRGDVLGTVKEGRFDHKIMVPFSCFEEVTITWVISSGNYTVDTVVAKGRTSTGEELEFTMVQKWPIKQAFLEGEKVPSHEIMDVGLRVLDTQIPVLKGGTFCTPGPFGAGKTVLQHHLSKYAAVDIVVLCACGERAGEVVEILQEFPHLTDPHTGQSLMHRTCIICNTSSMPVAARESSIYLGITIAEYYRQMGLHILLLADSTSRWAQALREISGRLEEIPGEEAFPAYLASRIAAFYERGGAVKMKDGSEGSLTICGAVSPAGGNFEEPVTQATLSVVGAFCGLSKARADARRYPSIDPMISWSKYLDSVAEILEKKVPGWGESVKQASRFLEEGAEIGKRIEVVGEEGISMEDMEIFLKSELYDFCYLQQNAFDAEDCYCPFDRQIELFSLMNHIFNSRFCFDCPDNARSFFLELQSKIKTLNGQKFLSEEYQKGLEVIYKLLESKMVQTV</sequence>
<organism>
    <name type="scientific">Chlamydia trachomatis serovar A (strain ATCC VR-571B / DSM 19440 / HAR-13)</name>
    <dbReference type="NCBI Taxonomy" id="315277"/>
    <lineage>
        <taxon>Bacteria</taxon>
        <taxon>Pseudomonadati</taxon>
        <taxon>Chlamydiota</taxon>
        <taxon>Chlamydiia</taxon>
        <taxon>Chlamydiales</taxon>
        <taxon>Chlamydiaceae</taxon>
        <taxon>Chlamydia/Chlamydophila group</taxon>
        <taxon>Chlamydia</taxon>
    </lineage>
</organism>
<proteinExistence type="inferred from homology"/>
<gene>
    <name evidence="1" type="primary">atpA</name>
    <name type="ordered locus">CTA_0330</name>
</gene>
<reference key="1">
    <citation type="journal article" date="2005" name="Infect. Immun.">
        <title>Comparative genomic analysis of Chlamydia trachomatis oculotropic and genitotropic strains.</title>
        <authorList>
            <person name="Carlson J.H."/>
            <person name="Porcella S.F."/>
            <person name="McClarty G."/>
            <person name="Caldwell H.D."/>
        </authorList>
    </citation>
    <scope>NUCLEOTIDE SEQUENCE [LARGE SCALE GENOMIC DNA]</scope>
    <source>
        <strain>ATCC VR-571B / DSM 19440 / HAR-13</strain>
    </source>
</reference>
<name>VATA_CHLTA</name>
<accession>Q3KM54</accession>